<organism>
    <name type="scientific">Natranaerobius thermophilus (strain ATCC BAA-1301 / DSM 18059 / JW/NM-WN-LF)</name>
    <dbReference type="NCBI Taxonomy" id="457570"/>
    <lineage>
        <taxon>Bacteria</taxon>
        <taxon>Bacillati</taxon>
        <taxon>Bacillota</taxon>
        <taxon>Clostridia</taxon>
        <taxon>Natranaerobiales</taxon>
        <taxon>Natranaerobiaceae</taxon>
        <taxon>Natranaerobius</taxon>
    </lineage>
</organism>
<proteinExistence type="inferred from homology"/>
<reference key="1">
    <citation type="submission" date="2008-04" db="EMBL/GenBank/DDBJ databases">
        <title>Complete sequence of chromosome of Natranaerobius thermophilus JW/NM-WN-LF.</title>
        <authorList>
            <consortium name="US DOE Joint Genome Institute"/>
            <person name="Copeland A."/>
            <person name="Lucas S."/>
            <person name="Lapidus A."/>
            <person name="Glavina del Rio T."/>
            <person name="Dalin E."/>
            <person name="Tice H."/>
            <person name="Bruce D."/>
            <person name="Goodwin L."/>
            <person name="Pitluck S."/>
            <person name="Chertkov O."/>
            <person name="Brettin T."/>
            <person name="Detter J.C."/>
            <person name="Han C."/>
            <person name="Kuske C.R."/>
            <person name="Schmutz J."/>
            <person name="Larimer F."/>
            <person name="Land M."/>
            <person name="Hauser L."/>
            <person name="Kyrpides N."/>
            <person name="Lykidis A."/>
            <person name="Mesbah N.M."/>
            <person name="Wiegel J."/>
        </authorList>
    </citation>
    <scope>NUCLEOTIDE SEQUENCE [LARGE SCALE GENOMIC DNA]</scope>
    <source>
        <strain>ATCC BAA-1301 / DSM 18059 / JW/NM-WN-LF</strain>
    </source>
</reference>
<keyword id="KW-0004">4Fe-4S</keyword>
<keyword id="KW-0408">Iron</keyword>
<keyword id="KW-0411">Iron-sulfur</keyword>
<keyword id="KW-0414">Isoprene biosynthesis</keyword>
<keyword id="KW-0479">Metal-binding</keyword>
<keyword id="KW-0560">Oxidoreductase</keyword>
<keyword id="KW-1185">Reference proteome</keyword>
<comment type="function">
    <text evidence="1">Converts 2C-methyl-D-erythritol 2,4-cyclodiphosphate (ME-2,4cPP) into 1-hydroxy-2-methyl-2-(E)-butenyl 4-diphosphate.</text>
</comment>
<comment type="catalytic activity">
    <reaction evidence="1">
        <text>(2E)-4-hydroxy-3-methylbut-2-enyl diphosphate + oxidized [flavodoxin] + H2O + 2 H(+) = 2-C-methyl-D-erythritol 2,4-cyclic diphosphate + reduced [flavodoxin]</text>
        <dbReference type="Rhea" id="RHEA:43604"/>
        <dbReference type="Rhea" id="RHEA-COMP:10622"/>
        <dbReference type="Rhea" id="RHEA-COMP:10623"/>
        <dbReference type="ChEBI" id="CHEBI:15377"/>
        <dbReference type="ChEBI" id="CHEBI:15378"/>
        <dbReference type="ChEBI" id="CHEBI:57618"/>
        <dbReference type="ChEBI" id="CHEBI:58210"/>
        <dbReference type="ChEBI" id="CHEBI:58483"/>
        <dbReference type="ChEBI" id="CHEBI:128753"/>
        <dbReference type="EC" id="1.17.7.3"/>
    </reaction>
</comment>
<comment type="cofactor">
    <cofactor evidence="1">
        <name>[4Fe-4S] cluster</name>
        <dbReference type="ChEBI" id="CHEBI:49883"/>
    </cofactor>
    <text evidence="1">Binds 1 [4Fe-4S] cluster.</text>
</comment>
<comment type="pathway">
    <text evidence="1">Isoprenoid biosynthesis; isopentenyl diphosphate biosynthesis via DXP pathway; isopentenyl diphosphate from 1-deoxy-D-xylulose 5-phosphate: step 5/6.</text>
</comment>
<comment type="similarity">
    <text evidence="1">Belongs to the IspG family.</text>
</comment>
<feature type="chain" id="PRO_1000123455" description="4-hydroxy-3-methylbut-2-en-1-yl diphosphate synthase (flavodoxin)">
    <location>
        <begin position="1"/>
        <end position="356"/>
    </location>
</feature>
<feature type="binding site" evidence="1">
    <location>
        <position position="264"/>
    </location>
    <ligand>
        <name>[4Fe-4S] cluster</name>
        <dbReference type="ChEBI" id="CHEBI:49883"/>
    </ligand>
</feature>
<feature type="binding site" evidence="1">
    <location>
        <position position="267"/>
    </location>
    <ligand>
        <name>[4Fe-4S] cluster</name>
        <dbReference type="ChEBI" id="CHEBI:49883"/>
    </ligand>
</feature>
<feature type="binding site" evidence="1">
    <location>
        <position position="299"/>
    </location>
    <ligand>
        <name>[4Fe-4S] cluster</name>
        <dbReference type="ChEBI" id="CHEBI:49883"/>
    </ligand>
</feature>
<feature type="binding site" evidence="1">
    <location>
        <position position="306"/>
    </location>
    <ligand>
        <name>[4Fe-4S] cluster</name>
        <dbReference type="ChEBI" id="CHEBI:49883"/>
    </ligand>
</feature>
<accession>B2A390</accession>
<gene>
    <name evidence="1" type="primary">ispG</name>
    <name type="ordered locus">Nther_1437</name>
</gene>
<dbReference type="EC" id="1.17.7.3" evidence="1"/>
<dbReference type="EMBL" id="CP001034">
    <property type="protein sequence ID" value="ACB85020.1"/>
    <property type="molecule type" value="Genomic_DNA"/>
</dbReference>
<dbReference type="RefSeq" id="WP_012447894.1">
    <property type="nucleotide sequence ID" value="NC_010718.1"/>
</dbReference>
<dbReference type="SMR" id="B2A390"/>
<dbReference type="FunCoup" id="B2A390">
    <property type="interactions" value="232"/>
</dbReference>
<dbReference type="STRING" id="457570.Nther_1437"/>
<dbReference type="KEGG" id="nth:Nther_1437"/>
<dbReference type="eggNOG" id="COG0821">
    <property type="taxonomic scope" value="Bacteria"/>
</dbReference>
<dbReference type="HOGENOM" id="CLU_042258_0_0_9"/>
<dbReference type="InParanoid" id="B2A390"/>
<dbReference type="OrthoDB" id="9803214at2"/>
<dbReference type="UniPathway" id="UPA00056">
    <property type="reaction ID" value="UER00096"/>
</dbReference>
<dbReference type="Proteomes" id="UP000001683">
    <property type="component" value="Chromosome"/>
</dbReference>
<dbReference type="GO" id="GO:0051539">
    <property type="term" value="F:4 iron, 4 sulfur cluster binding"/>
    <property type="evidence" value="ECO:0007669"/>
    <property type="project" value="UniProtKB-UniRule"/>
</dbReference>
<dbReference type="GO" id="GO:0046429">
    <property type="term" value="F:4-hydroxy-3-methylbut-2-en-1-yl diphosphate synthase activity (ferredoxin)"/>
    <property type="evidence" value="ECO:0007669"/>
    <property type="project" value="UniProtKB-UniRule"/>
</dbReference>
<dbReference type="GO" id="GO:0141197">
    <property type="term" value="F:4-hydroxy-3-methylbut-2-enyl-diphosphate synthase activity (flavodoxin)"/>
    <property type="evidence" value="ECO:0007669"/>
    <property type="project" value="UniProtKB-EC"/>
</dbReference>
<dbReference type="GO" id="GO:0005506">
    <property type="term" value="F:iron ion binding"/>
    <property type="evidence" value="ECO:0007669"/>
    <property type="project" value="InterPro"/>
</dbReference>
<dbReference type="GO" id="GO:0019288">
    <property type="term" value="P:isopentenyl diphosphate biosynthetic process, methylerythritol 4-phosphate pathway"/>
    <property type="evidence" value="ECO:0007669"/>
    <property type="project" value="UniProtKB-UniRule"/>
</dbReference>
<dbReference type="GO" id="GO:0016114">
    <property type="term" value="P:terpenoid biosynthetic process"/>
    <property type="evidence" value="ECO:0007669"/>
    <property type="project" value="InterPro"/>
</dbReference>
<dbReference type="FunFam" id="3.20.20.20:FF:000001">
    <property type="entry name" value="4-hydroxy-3-methylbut-2-en-1-yl diphosphate synthase (flavodoxin)"/>
    <property type="match status" value="1"/>
</dbReference>
<dbReference type="Gene3D" id="3.20.20.20">
    <property type="entry name" value="Dihydropteroate synthase-like"/>
    <property type="match status" value="1"/>
</dbReference>
<dbReference type="Gene3D" id="3.30.413.10">
    <property type="entry name" value="Sulfite Reductase Hemoprotein, domain 1"/>
    <property type="match status" value="1"/>
</dbReference>
<dbReference type="HAMAP" id="MF_00159">
    <property type="entry name" value="IspG"/>
    <property type="match status" value="1"/>
</dbReference>
<dbReference type="InterPro" id="IPR011005">
    <property type="entry name" value="Dihydropteroate_synth-like_sf"/>
</dbReference>
<dbReference type="InterPro" id="IPR016425">
    <property type="entry name" value="IspG_bac"/>
</dbReference>
<dbReference type="InterPro" id="IPR004588">
    <property type="entry name" value="IspG_bac-typ"/>
</dbReference>
<dbReference type="InterPro" id="IPR045854">
    <property type="entry name" value="NO2/SO3_Rdtase_4Fe4S_sf"/>
</dbReference>
<dbReference type="NCBIfam" id="TIGR00612">
    <property type="entry name" value="ispG_gcpE"/>
    <property type="match status" value="1"/>
</dbReference>
<dbReference type="NCBIfam" id="NF001540">
    <property type="entry name" value="PRK00366.1"/>
    <property type="match status" value="1"/>
</dbReference>
<dbReference type="PANTHER" id="PTHR30454">
    <property type="entry name" value="4-HYDROXY-3-METHYLBUT-2-EN-1-YL DIPHOSPHATE SYNTHASE"/>
    <property type="match status" value="1"/>
</dbReference>
<dbReference type="PANTHER" id="PTHR30454:SF0">
    <property type="entry name" value="4-HYDROXY-3-METHYLBUT-2-EN-1-YL DIPHOSPHATE SYNTHASE (FERREDOXIN), CHLOROPLASTIC"/>
    <property type="match status" value="1"/>
</dbReference>
<dbReference type="Pfam" id="PF04551">
    <property type="entry name" value="GcpE"/>
    <property type="match status" value="1"/>
</dbReference>
<dbReference type="PIRSF" id="PIRSF004640">
    <property type="entry name" value="IspG"/>
    <property type="match status" value="1"/>
</dbReference>
<dbReference type="SUPFAM" id="SSF51717">
    <property type="entry name" value="Dihydropteroate synthetase-like"/>
    <property type="match status" value="1"/>
</dbReference>
<dbReference type="SUPFAM" id="SSF56014">
    <property type="entry name" value="Nitrite and sulphite reductase 4Fe-4S domain-like"/>
    <property type="match status" value="1"/>
</dbReference>
<evidence type="ECO:0000255" key="1">
    <source>
        <dbReference type="HAMAP-Rule" id="MF_00159"/>
    </source>
</evidence>
<name>ISPG_NATTJ</name>
<protein>
    <recommendedName>
        <fullName evidence="1">4-hydroxy-3-methylbut-2-en-1-yl diphosphate synthase (flavodoxin)</fullName>
        <ecNumber evidence="1">1.17.7.3</ecNumber>
    </recommendedName>
    <alternativeName>
        <fullName evidence="1">1-hydroxy-2-methyl-2-(E)-butenyl 4-diphosphate synthase</fullName>
    </alternativeName>
</protein>
<sequence length="356" mass="37862">MSRRHRTFPVKVGSVTIGGTAPVTIQSMTNTDTKDTEKTLAQIKDLVEAGCQLVRVAIPDEESVNSFKTLTQFSPVPLIADIHFSYQLAIKAIEAGASKIRINPGNIGSRQRVAKVVEKAKTHNVPIRVGINSGSVEKNLLQKYGGPTPSALVESAVNNVMMLSEMGFGDVVVSIKASDVNTTVKANQEFATRLPNPLHLGITEAGTIKQGTIKSSVGIGTLLSHGIGDTLRVSLSGSPIEEVSVARGILSSLNLAEGPRIVSCPTCARSNISVEDLASTVEDRLKDLNTSLTVAVMGCEVNGPGEAKEADIGIAGSKEYGVLFKKGKIIDRVPKNQLLEVLSRAIDEYIDEIHSK</sequence>